<protein>
    <recommendedName>
        <fullName>Probable intramembrane protease C25B8.17</fullName>
        <ecNumber>3.4.23.-</ecNumber>
    </recommendedName>
</protein>
<reference key="1">
    <citation type="journal article" date="2002" name="Nature">
        <title>The genome sequence of Schizosaccharomyces pombe.</title>
        <authorList>
            <person name="Wood V."/>
            <person name="Gwilliam R."/>
            <person name="Rajandream M.A."/>
            <person name="Lyne M.H."/>
            <person name="Lyne R."/>
            <person name="Stewart A."/>
            <person name="Sgouros J.G."/>
            <person name="Peat N."/>
            <person name="Hayles J."/>
            <person name="Baker S.G."/>
            <person name="Basham D."/>
            <person name="Bowman S."/>
            <person name="Brooks K."/>
            <person name="Brown D."/>
            <person name="Brown S."/>
            <person name="Chillingworth T."/>
            <person name="Churcher C.M."/>
            <person name="Collins M."/>
            <person name="Connor R."/>
            <person name="Cronin A."/>
            <person name="Davis P."/>
            <person name="Feltwell T."/>
            <person name="Fraser A."/>
            <person name="Gentles S."/>
            <person name="Goble A."/>
            <person name="Hamlin N."/>
            <person name="Harris D.E."/>
            <person name="Hidalgo J."/>
            <person name="Hodgson G."/>
            <person name="Holroyd S."/>
            <person name="Hornsby T."/>
            <person name="Howarth S."/>
            <person name="Huckle E.J."/>
            <person name="Hunt S."/>
            <person name="Jagels K."/>
            <person name="James K.D."/>
            <person name="Jones L."/>
            <person name="Jones M."/>
            <person name="Leather S."/>
            <person name="McDonald S."/>
            <person name="McLean J."/>
            <person name="Mooney P."/>
            <person name="Moule S."/>
            <person name="Mungall K.L."/>
            <person name="Murphy L.D."/>
            <person name="Niblett D."/>
            <person name="Odell C."/>
            <person name="Oliver K."/>
            <person name="O'Neil S."/>
            <person name="Pearson D."/>
            <person name="Quail M.A."/>
            <person name="Rabbinowitsch E."/>
            <person name="Rutherford K.M."/>
            <person name="Rutter S."/>
            <person name="Saunders D."/>
            <person name="Seeger K."/>
            <person name="Sharp S."/>
            <person name="Skelton J."/>
            <person name="Simmonds M.N."/>
            <person name="Squares R."/>
            <person name="Squares S."/>
            <person name="Stevens K."/>
            <person name="Taylor K."/>
            <person name="Taylor R.G."/>
            <person name="Tivey A."/>
            <person name="Walsh S.V."/>
            <person name="Warren T."/>
            <person name="Whitehead S."/>
            <person name="Woodward J.R."/>
            <person name="Volckaert G."/>
            <person name="Aert R."/>
            <person name="Robben J."/>
            <person name="Grymonprez B."/>
            <person name="Weltjens I."/>
            <person name="Vanstreels E."/>
            <person name="Rieger M."/>
            <person name="Schaefer M."/>
            <person name="Mueller-Auer S."/>
            <person name="Gabel C."/>
            <person name="Fuchs M."/>
            <person name="Duesterhoeft A."/>
            <person name="Fritzc C."/>
            <person name="Holzer E."/>
            <person name="Moestl D."/>
            <person name="Hilbert H."/>
            <person name="Borzym K."/>
            <person name="Langer I."/>
            <person name="Beck A."/>
            <person name="Lehrach H."/>
            <person name="Reinhardt R."/>
            <person name="Pohl T.M."/>
            <person name="Eger P."/>
            <person name="Zimmermann W."/>
            <person name="Wedler H."/>
            <person name="Wambutt R."/>
            <person name="Purnelle B."/>
            <person name="Goffeau A."/>
            <person name="Cadieu E."/>
            <person name="Dreano S."/>
            <person name="Gloux S."/>
            <person name="Lelaure V."/>
            <person name="Mottier S."/>
            <person name="Galibert F."/>
            <person name="Aves S.J."/>
            <person name="Xiang Z."/>
            <person name="Hunt C."/>
            <person name="Moore K."/>
            <person name="Hurst S.M."/>
            <person name="Lucas M."/>
            <person name="Rochet M."/>
            <person name="Gaillardin C."/>
            <person name="Tallada V.A."/>
            <person name="Garzon A."/>
            <person name="Thode G."/>
            <person name="Daga R.R."/>
            <person name="Cruzado L."/>
            <person name="Jimenez J."/>
            <person name="Sanchez M."/>
            <person name="del Rey F."/>
            <person name="Benito J."/>
            <person name="Dominguez A."/>
            <person name="Revuelta J.L."/>
            <person name="Moreno S."/>
            <person name="Armstrong J."/>
            <person name="Forsburg S.L."/>
            <person name="Cerutti L."/>
            <person name="Lowe T."/>
            <person name="McCombie W.R."/>
            <person name="Paulsen I."/>
            <person name="Potashkin J."/>
            <person name="Shpakovski G.V."/>
            <person name="Ussery D."/>
            <person name="Barrell B.G."/>
            <person name="Nurse P."/>
        </authorList>
    </citation>
    <scope>NUCLEOTIDE SEQUENCE [LARGE SCALE GENOMIC DNA]</scope>
    <source>
        <strain>972 / ATCC 24843</strain>
    </source>
</reference>
<reference key="2">
    <citation type="journal article" date="2006" name="Nat. Biotechnol.">
        <title>ORFeome cloning and global analysis of protein localization in the fission yeast Schizosaccharomyces pombe.</title>
        <authorList>
            <person name="Matsuyama A."/>
            <person name="Arai R."/>
            <person name="Yashiroda Y."/>
            <person name="Shirai A."/>
            <person name="Kamata A."/>
            <person name="Sekido S."/>
            <person name="Kobayashi Y."/>
            <person name="Hashimoto A."/>
            <person name="Hamamoto M."/>
            <person name="Hiraoka Y."/>
            <person name="Horinouchi S."/>
            <person name="Yoshida M."/>
        </authorList>
    </citation>
    <scope>SUBCELLULAR LOCATION [LARGE SCALE ANALYSIS]</scope>
</reference>
<organism>
    <name type="scientific">Schizosaccharomyces pombe (strain 972 / ATCC 24843)</name>
    <name type="common">Fission yeast</name>
    <dbReference type="NCBI Taxonomy" id="284812"/>
    <lineage>
        <taxon>Eukaryota</taxon>
        <taxon>Fungi</taxon>
        <taxon>Dikarya</taxon>
        <taxon>Ascomycota</taxon>
        <taxon>Taphrinomycotina</taxon>
        <taxon>Schizosaccharomycetes</taxon>
        <taxon>Schizosaccharomycetales</taxon>
        <taxon>Schizosaccharomycetaceae</taxon>
        <taxon>Schizosaccharomyces</taxon>
    </lineage>
</organism>
<keyword id="KW-0256">Endoplasmic reticulum</keyword>
<keyword id="KW-0333">Golgi apparatus</keyword>
<keyword id="KW-0378">Hydrolase</keyword>
<keyword id="KW-0472">Membrane</keyword>
<keyword id="KW-0645">Protease</keyword>
<keyword id="KW-1185">Reference proteome</keyword>
<keyword id="KW-0812">Transmembrane</keyword>
<keyword id="KW-1133">Transmembrane helix</keyword>
<name>YL8H_SCHPO</name>
<accession>Q9UTA3</accession>
<feature type="chain" id="PRO_0000316621" description="Probable intramembrane protease C25B8.17">
    <location>
        <begin position="1"/>
        <end position="295"/>
    </location>
</feature>
<feature type="transmembrane region" description="Helical" evidence="2">
    <location>
        <begin position="1"/>
        <end position="21"/>
    </location>
</feature>
<feature type="topological domain" description="Cytoplasmic" evidence="2">
    <location>
        <begin position="22"/>
        <end position="35"/>
    </location>
</feature>
<feature type="transmembrane region" description="Helical" evidence="2">
    <location>
        <begin position="36"/>
        <end position="56"/>
    </location>
</feature>
<feature type="topological domain" description="Lumenal" evidence="2">
    <location>
        <begin position="57"/>
        <end position="63"/>
    </location>
</feature>
<feature type="transmembrane region" description="Helical" evidence="2">
    <location>
        <begin position="64"/>
        <end position="84"/>
    </location>
</feature>
<feature type="topological domain" description="Cytoplasmic" evidence="2">
    <location>
        <begin position="85"/>
        <end position="89"/>
    </location>
</feature>
<feature type="transmembrane region" description="Helical" evidence="2">
    <location>
        <begin position="90"/>
        <end position="106"/>
    </location>
</feature>
<feature type="topological domain" description="Lumenal" evidence="2">
    <location>
        <begin position="107"/>
        <end position="111"/>
    </location>
</feature>
<feature type="transmembrane region" description="Helical" evidence="2">
    <location>
        <begin position="112"/>
        <end position="130"/>
    </location>
</feature>
<feature type="topological domain" description="Cytoplasmic" evidence="2">
    <location>
        <begin position="131"/>
        <end position="139"/>
    </location>
</feature>
<feature type="transmembrane region" description="Helical" evidence="2">
    <location>
        <begin position="140"/>
        <end position="160"/>
    </location>
</feature>
<feature type="topological domain" description="Lumenal" evidence="2">
    <location>
        <begin position="161"/>
        <end position="183"/>
    </location>
</feature>
<feature type="transmembrane region" description="Helical" evidence="2">
    <location>
        <begin position="184"/>
        <end position="204"/>
    </location>
</feature>
<feature type="topological domain" description="Cytoplasmic" evidence="2">
    <location>
        <begin position="205"/>
        <end position="221"/>
    </location>
</feature>
<feature type="transmembrane region" description="Helical" evidence="2">
    <location>
        <begin position="222"/>
        <end position="244"/>
    </location>
</feature>
<feature type="topological domain" description="Lumenal" evidence="2">
    <location>
        <begin position="245"/>
        <end position="249"/>
    </location>
</feature>
<feature type="transmembrane region" description="Helical" evidence="2">
    <location>
        <begin position="250"/>
        <end position="268"/>
    </location>
</feature>
<feature type="topological domain" description="Cytoplasmic" evidence="2">
    <location>
        <begin position="269"/>
        <end position="295"/>
    </location>
</feature>
<feature type="short sequence motif" description="PAL">
    <location>
        <begin position="249"/>
        <end position="251"/>
    </location>
</feature>
<feature type="active site" evidence="1">
    <location>
        <position position="149"/>
    </location>
</feature>
<feature type="active site" evidence="1">
    <location>
        <position position="190"/>
    </location>
</feature>
<comment type="subcellular location">
    <subcellularLocation>
        <location evidence="3">Endoplasmic reticulum membrane</location>
        <topology evidence="3">Multi-pass membrane protein</topology>
    </subcellularLocation>
    <subcellularLocation>
        <location evidence="3">Golgi apparatus membrane</location>
        <topology evidence="3">Multi-pass membrane protein</topology>
    </subcellularLocation>
</comment>
<comment type="domain">
    <text evidence="1">The PAL motif is required for normal active site conformation.</text>
</comment>
<comment type="similarity">
    <text evidence="4">Belongs to the peptidase A22B family.</text>
</comment>
<proteinExistence type="inferred from homology"/>
<gene>
    <name type="ORF">SPAC25B8.17</name>
</gene>
<evidence type="ECO:0000250" key="1"/>
<evidence type="ECO:0000255" key="2"/>
<evidence type="ECO:0000269" key="3">
    <source>
    </source>
</evidence>
<evidence type="ECO:0000305" key="4"/>
<sequence>MEGVILASSALFTVYIGAKWSAQEEEPEEKQLINKRLAVLFPIFGGVTLVLMYLALRYLSKEYIQLILQGYASLASIICFVRSFNPKTTFGKITATMSSIAIALFYFKTKHWMASNILAWALAANSISIMRIDSYNTGALLLGALFFYDIYFVFGTEVMVTVATGIDIPAKYVLPQFKNPTRLSMLGLGDIVMPGLMLALMYRFDLHYYINSTSQPKKHSTYFRNTFIAYGLGLGVTNFALYYFKAAQPALLYLSPACIVAPLLTAWYRDELKTLFSFRSETEDETDEQDKCKST</sequence>
<dbReference type="EC" id="3.4.23.-"/>
<dbReference type="EMBL" id="CU329670">
    <property type="protein sequence ID" value="CAB61783.1"/>
    <property type="molecule type" value="Genomic_DNA"/>
</dbReference>
<dbReference type="PIR" id="T50204">
    <property type="entry name" value="T50204"/>
</dbReference>
<dbReference type="BioGRID" id="279165">
    <property type="interactions" value="8"/>
</dbReference>
<dbReference type="FunCoup" id="Q9UTA3">
    <property type="interactions" value="174"/>
</dbReference>
<dbReference type="STRING" id="284812.Q9UTA3"/>
<dbReference type="MEROPS" id="A22.A11"/>
<dbReference type="PaxDb" id="4896-SPAC25B8.17.1"/>
<dbReference type="EnsemblFungi" id="SPAC25B8.17.1">
    <property type="protein sequence ID" value="SPAC25B8.17.1:pep"/>
    <property type="gene ID" value="SPAC25B8.17"/>
</dbReference>
<dbReference type="KEGG" id="spo:2542712"/>
<dbReference type="PomBase" id="SPAC25B8.17"/>
<dbReference type="VEuPathDB" id="FungiDB:SPAC25B8.17"/>
<dbReference type="eggNOG" id="KOG2443">
    <property type="taxonomic scope" value="Eukaryota"/>
</dbReference>
<dbReference type="HOGENOM" id="CLU_023799_0_0_1"/>
<dbReference type="InParanoid" id="Q9UTA3"/>
<dbReference type="OMA" id="FLYDIWW"/>
<dbReference type="PhylomeDB" id="Q9UTA3"/>
<dbReference type="PRO" id="PR:Q9UTA3"/>
<dbReference type="Proteomes" id="UP000002485">
    <property type="component" value="Chromosome I"/>
</dbReference>
<dbReference type="GO" id="GO:0098554">
    <property type="term" value="C:cytoplasmic side of endoplasmic reticulum membrane"/>
    <property type="evidence" value="ECO:0000318"/>
    <property type="project" value="GO_Central"/>
</dbReference>
<dbReference type="GO" id="GO:0005783">
    <property type="term" value="C:endoplasmic reticulum"/>
    <property type="evidence" value="ECO:0007005"/>
    <property type="project" value="PomBase"/>
</dbReference>
<dbReference type="GO" id="GO:0000139">
    <property type="term" value="C:Golgi membrane"/>
    <property type="evidence" value="ECO:0007669"/>
    <property type="project" value="UniProtKB-SubCell"/>
</dbReference>
<dbReference type="GO" id="GO:0098553">
    <property type="term" value="C:lumenal side of endoplasmic reticulum membrane"/>
    <property type="evidence" value="ECO:0000318"/>
    <property type="project" value="GO_Central"/>
</dbReference>
<dbReference type="GO" id="GO:1990578">
    <property type="term" value="C:perinuclear endoplasmic reticulum membrane"/>
    <property type="evidence" value="ECO:0000266"/>
    <property type="project" value="PomBase"/>
</dbReference>
<dbReference type="GO" id="GO:0042500">
    <property type="term" value="F:aspartic endopeptidase activity, intramembrane cleaving"/>
    <property type="evidence" value="ECO:0000318"/>
    <property type="project" value="GO_Central"/>
</dbReference>
<dbReference type="GO" id="GO:0036503">
    <property type="term" value="P:ERAD pathway"/>
    <property type="evidence" value="ECO:0000266"/>
    <property type="project" value="PomBase"/>
</dbReference>
<dbReference type="GO" id="GO:0033619">
    <property type="term" value="P:membrane protein proteolysis"/>
    <property type="evidence" value="ECO:0000318"/>
    <property type="project" value="GO_Central"/>
</dbReference>
<dbReference type="GO" id="GO:0006465">
    <property type="term" value="P:signal peptide processing"/>
    <property type="evidence" value="ECO:0000318"/>
    <property type="project" value="GO_Central"/>
</dbReference>
<dbReference type="InterPro" id="IPR007369">
    <property type="entry name" value="Peptidase_A22B_SPP"/>
</dbReference>
<dbReference type="InterPro" id="IPR006639">
    <property type="entry name" value="Preselin/SPP"/>
</dbReference>
<dbReference type="PANTHER" id="PTHR12174:SF23">
    <property type="entry name" value="MINOR HISTOCOMPATIBILITY ANTIGEN H13"/>
    <property type="match status" value="1"/>
</dbReference>
<dbReference type="PANTHER" id="PTHR12174">
    <property type="entry name" value="SIGNAL PEPTIDE PEPTIDASE"/>
    <property type="match status" value="1"/>
</dbReference>
<dbReference type="Pfam" id="PF04258">
    <property type="entry name" value="Peptidase_A22B"/>
    <property type="match status" value="1"/>
</dbReference>
<dbReference type="SMART" id="SM00730">
    <property type="entry name" value="PSN"/>
    <property type="match status" value="1"/>
</dbReference>